<keyword id="KW-0119">Carbohydrate metabolism</keyword>
<keyword id="KW-0320">Glycogen biosynthesis</keyword>
<keyword id="KW-0321">Glycogen metabolism</keyword>
<keyword id="KW-0328">Glycosyltransferase</keyword>
<keyword id="KW-1185">Reference proteome</keyword>
<keyword id="KW-0808">Transferase</keyword>
<gene>
    <name type="primary">glgB</name>
    <name type="ordered locus">HI_1357</name>
</gene>
<feature type="chain" id="PRO_0000188710" description="1,4-alpha-glucan branching enzyme GlgB">
    <location>
        <begin position="1"/>
        <end position="730"/>
    </location>
</feature>
<feature type="active site" description="Nucleophile" evidence="1">
    <location>
        <position position="405"/>
    </location>
</feature>
<feature type="active site" description="Proton donor" evidence="1">
    <location>
        <position position="458"/>
    </location>
</feature>
<proteinExistence type="inferred from homology"/>
<organism>
    <name type="scientific">Haemophilus influenzae (strain ATCC 51907 / DSM 11121 / KW20 / Rd)</name>
    <dbReference type="NCBI Taxonomy" id="71421"/>
    <lineage>
        <taxon>Bacteria</taxon>
        <taxon>Pseudomonadati</taxon>
        <taxon>Pseudomonadota</taxon>
        <taxon>Gammaproteobacteria</taxon>
        <taxon>Pasteurellales</taxon>
        <taxon>Pasteurellaceae</taxon>
        <taxon>Haemophilus</taxon>
    </lineage>
</organism>
<dbReference type="EC" id="2.4.1.18"/>
<dbReference type="EMBL" id="L42023">
    <property type="protein sequence ID" value="AAC23004.1"/>
    <property type="molecule type" value="Genomic_DNA"/>
</dbReference>
<dbReference type="PIR" id="I64118">
    <property type="entry name" value="I64118"/>
</dbReference>
<dbReference type="RefSeq" id="NP_439508.1">
    <property type="nucleotide sequence ID" value="NC_000907.1"/>
</dbReference>
<dbReference type="SMR" id="P45177"/>
<dbReference type="STRING" id="71421.HI_1357"/>
<dbReference type="CAZy" id="CBM48">
    <property type="family name" value="Carbohydrate-Binding Module Family 48"/>
</dbReference>
<dbReference type="CAZy" id="GH13">
    <property type="family name" value="Glycoside Hydrolase Family 13"/>
</dbReference>
<dbReference type="EnsemblBacteria" id="AAC23004">
    <property type="protein sequence ID" value="AAC23004"/>
    <property type="gene ID" value="HI_1357"/>
</dbReference>
<dbReference type="KEGG" id="hin:HI_1357"/>
<dbReference type="PATRIC" id="fig|71421.8.peg.1410"/>
<dbReference type="eggNOG" id="COG0296">
    <property type="taxonomic scope" value="Bacteria"/>
</dbReference>
<dbReference type="HOGENOM" id="CLU_004245_3_2_6"/>
<dbReference type="OrthoDB" id="9800174at2"/>
<dbReference type="PhylomeDB" id="P45177"/>
<dbReference type="BioCyc" id="HINF71421:G1GJ1-1382-MONOMER"/>
<dbReference type="UniPathway" id="UPA00164"/>
<dbReference type="Proteomes" id="UP000000579">
    <property type="component" value="Chromosome"/>
</dbReference>
<dbReference type="GO" id="GO:0005737">
    <property type="term" value="C:cytoplasm"/>
    <property type="evidence" value="ECO:0000318"/>
    <property type="project" value="GO_Central"/>
</dbReference>
<dbReference type="GO" id="GO:0005829">
    <property type="term" value="C:cytosol"/>
    <property type="evidence" value="ECO:0000318"/>
    <property type="project" value="GO_Central"/>
</dbReference>
<dbReference type="GO" id="GO:0003844">
    <property type="term" value="F:1,4-alpha-glucan branching enzyme activity"/>
    <property type="evidence" value="ECO:0000318"/>
    <property type="project" value="GO_Central"/>
</dbReference>
<dbReference type="GO" id="GO:0043169">
    <property type="term" value="F:cation binding"/>
    <property type="evidence" value="ECO:0007669"/>
    <property type="project" value="InterPro"/>
</dbReference>
<dbReference type="GO" id="GO:0004553">
    <property type="term" value="F:hydrolase activity, hydrolyzing O-glycosyl compounds"/>
    <property type="evidence" value="ECO:0007669"/>
    <property type="project" value="InterPro"/>
</dbReference>
<dbReference type="GO" id="GO:0005978">
    <property type="term" value="P:glycogen biosynthetic process"/>
    <property type="evidence" value="ECO:0000318"/>
    <property type="project" value="GO_Central"/>
</dbReference>
<dbReference type="CDD" id="cd11322">
    <property type="entry name" value="AmyAc_Glg_BE"/>
    <property type="match status" value="1"/>
</dbReference>
<dbReference type="CDD" id="cd02855">
    <property type="entry name" value="E_set_GBE_prok_N"/>
    <property type="match status" value="1"/>
</dbReference>
<dbReference type="FunFam" id="2.60.40.10:FF:000169">
    <property type="entry name" value="1,4-alpha-glucan branching enzyme GlgB"/>
    <property type="match status" value="1"/>
</dbReference>
<dbReference type="FunFam" id="2.60.40.1180:FF:000002">
    <property type="entry name" value="1,4-alpha-glucan branching enzyme GlgB"/>
    <property type="match status" value="1"/>
</dbReference>
<dbReference type="FunFam" id="3.20.20.80:FF:000003">
    <property type="entry name" value="1,4-alpha-glucan branching enzyme GlgB"/>
    <property type="match status" value="1"/>
</dbReference>
<dbReference type="Gene3D" id="3.20.20.80">
    <property type="entry name" value="Glycosidases"/>
    <property type="match status" value="1"/>
</dbReference>
<dbReference type="Gene3D" id="2.60.40.1180">
    <property type="entry name" value="Golgi alpha-mannosidase II"/>
    <property type="match status" value="1"/>
</dbReference>
<dbReference type="Gene3D" id="2.60.40.10">
    <property type="entry name" value="Immunoglobulins"/>
    <property type="match status" value="1"/>
</dbReference>
<dbReference type="HAMAP" id="MF_00685">
    <property type="entry name" value="GlgB"/>
    <property type="match status" value="1"/>
</dbReference>
<dbReference type="InterPro" id="IPR006048">
    <property type="entry name" value="A-amylase/branching_C"/>
</dbReference>
<dbReference type="InterPro" id="IPR037439">
    <property type="entry name" value="Branching_enzy"/>
</dbReference>
<dbReference type="InterPro" id="IPR006407">
    <property type="entry name" value="GlgB"/>
</dbReference>
<dbReference type="InterPro" id="IPR054169">
    <property type="entry name" value="GlgB_N"/>
</dbReference>
<dbReference type="InterPro" id="IPR044143">
    <property type="entry name" value="GlgB_N_E_set_prok"/>
</dbReference>
<dbReference type="InterPro" id="IPR006047">
    <property type="entry name" value="Glyco_hydro_13_cat_dom"/>
</dbReference>
<dbReference type="InterPro" id="IPR004193">
    <property type="entry name" value="Glyco_hydro_13_N"/>
</dbReference>
<dbReference type="InterPro" id="IPR013780">
    <property type="entry name" value="Glyco_hydro_b"/>
</dbReference>
<dbReference type="InterPro" id="IPR017853">
    <property type="entry name" value="Glycoside_hydrolase_SF"/>
</dbReference>
<dbReference type="InterPro" id="IPR013783">
    <property type="entry name" value="Ig-like_fold"/>
</dbReference>
<dbReference type="InterPro" id="IPR014756">
    <property type="entry name" value="Ig_E-set"/>
</dbReference>
<dbReference type="NCBIfam" id="TIGR01515">
    <property type="entry name" value="branching_enzym"/>
    <property type="match status" value="1"/>
</dbReference>
<dbReference type="NCBIfam" id="NF003811">
    <property type="entry name" value="PRK05402.1"/>
    <property type="match status" value="1"/>
</dbReference>
<dbReference type="NCBIfam" id="NF008967">
    <property type="entry name" value="PRK12313.1"/>
    <property type="match status" value="1"/>
</dbReference>
<dbReference type="PANTHER" id="PTHR43651">
    <property type="entry name" value="1,4-ALPHA-GLUCAN-BRANCHING ENZYME"/>
    <property type="match status" value="1"/>
</dbReference>
<dbReference type="PANTHER" id="PTHR43651:SF3">
    <property type="entry name" value="1,4-ALPHA-GLUCAN-BRANCHING ENZYME"/>
    <property type="match status" value="1"/>
</dbReference>
<dbReference type="Pfam" id="PF00128">
    <property type="entry name" value="Alpha-amylase"/>
    <property type="match status" value="1"/>
</dbReference>
<dbReference type="Pfam" id="PF02806">
    <property type="entry name" value="Alpha-amylase_C"/>
    <property type="match status" value="1"/>
</dbReference>
<dbReference type="Pfam" id="PF02922">
    <property type="entry name" value="CBM_48"/>
    <property type="match status" value="1"/>
</dbReference>
<dbReference type="Pfam" id="PF22019">
    <property type="entry name" value="GlgB_N"/>
    <property type="match status" value="1"/>
</dbReference>
<dbReference type="PIRSF" id="PIRSF000463">
    <property type="entry name" value="GlgB"/>
    <property type="match status" value="1"/>
</dbReference>
<dbReference type="SMART" id="SM00642">
    <property type="entry name" value="Aamy"/>
    <property type="match status" value="1"/>
</dbReference>
<dbReference type="SUPFAM" id="SSF51445">
    <property type="entry name" value="(Trans)glycosidases"/>
    <property type="match status" value="1"/>
</dbReference>
<dbReference type="SUPFAM" id="SSF81296">
    <property type="entry name" value="E set domains"/>
    <property type="match status" value="2"/>
</dbReference>
<dbReference type="SUPFAM" id="SSF51011">
    <property type="entry name" value="Glycosyl hydrolase domain"/>
    <property type="match status" value="1"/>
</dbReference>
<protein>
    <recommendedName>
        <fullName>1,4-alpha-glucan branching enzyme GlgB</fullName>
        <ecNumber>2.4.1.18</ecNumber>
    </recommendedName>
    <alternativeName>
        <fullName>1,4-alpha-D-glucan:1,4-alpha-D-glucan 6-glucosyl-transferase</fullName>
    </alternativeName>
    <alternativeName>
        <fullName>Alpha-(1-&gt;4)-glucan branching enzyme</fullName>
    </alternativeName>
    <alternativeName>
        <fullName>Glycogen branching enzyme</fullName>
        <shortName>BE</shortName>
    </alternativeName>
</protein>
<sequence length="730" mass="83820">MTTAVTQAIIDGFFDASNGDPFATLGMHETEQGIEIRTLLPDANRMVVIERESGKEITELDCVDERGFFVGVIPNCRQFFAYQLQVFWGNEAQIIEDPYRFHPMIDDLEQWLLSEGSMLRPYEVLGAHFMECDGVSGVNFRLWAPNARRVSIVGDFNYWDGRRHPMRFHSKSGVWELFLPKASLGQLYKFELIDCHGNLRLKADPFAFSSQLRPDTASQVSALPNVVEMTEARKKANQGNQPISIYEVHLGSWRRNLENNFWLDYDQIADELIPYVKEMGFTHIEFLPLSEFPFDGSWGYQPLGLYSPTSRFGSPEAFRRLVKRAHEAGINVILDWVPGHFPSDTHGLVAFDGTALYEHEDPREGYHQDWNTLIYNYGRNEVKNFLSSNALYWLERFGVDGIRVDAVASMIYRDYSRAEGEWIPNQYGGRENLEAIEFLKHTNWKIHSEMAGAISIAEESTSFAGVTHPSENGGLGFNFKWNMGWMNDTLAYMKLDPIYRQYHHNKMTFGMVYQYSENFVLPLSHDEVVHGKYSLLGKMPGDTWQKFANLRAYYGYMWGYPGKKLLFMGNEFAQGREWNYEESLDWFLLDENIGGGWHKGVLKLVKDLNQIYQKNRPLFELDNSPEGFDWLVVDDAANSVLAFERRSSNGERIIVVSNFTPVPRHNYRIGVNVAGKYEEILNTDSMYYEGSNVGNFGCVASEQIESHGRENSISVSIPPLATVYLRLKTK</sequence>
<evidence type="ECO:0000250" key="1"/>
<evidence type="ECO:0000305" key="2"/>
<name>GLGB_HAEIN</name>
<comment type="function">
    <text evidence="1">Catalyzes the formation of the alpha-1,6-glucosidic linkages in glycogen by scission of a 1,4-alpha-linked oligosaccharide from growing alpha-1,4-glucan chains and the subsequent attachment of the oligosaccharide to the alpha-1,6 position.</text>
</comment>
<comment type="catalytic activity">
    <reaction>
        <text>Transfers a segment of a (1-&gt;4)-alpha-D-glucan chain to a primary hydroxy group in a similar glucan chain.</text>
        <dbReference type="EC" id="2.4.1.18"/>
    </reaction>
</comment>
<comment type="pathway">
    <text>Glycan biosynthesis; glycogen biosynthesis.</text>
</comment>
<comment type="subunit">
    <text evidence="1">Monomer.</text>
</comment>
<comment type="similarity">
    <text evidence="2">Belongs to the glycosyl hydrolase 13 family. GlgB subfamily.</text>
</comment>
<reference key="1">
    <citation type="journal article" date="1995" name="Science">
        <title>Whole-genome random sequencing and assembly of Haemophilus influenzae Rd.</title>
        <authorList>
            <person name="Fleischmann R.D."/>
            <person name="Adams M.D."/>
            <person name="White O."/>
            <person name="Clayton R.A."/>
            <person name="Kirkness E.F."/>
            <person name="Kerlavage A.R."/>
            <person name="Bult C.J."/>
            <person name="Tomb J.-F."/>
            <person name="Dougherty B.A."/>
            <person name="Merrick J.M."/>
            <person name="McKenney K."/>
            <person name="Sutton G.G."/>
            <person name="FitzHugh W."/>
            <person name="Fields C.A."/>
            <person name="Gocayne J.D."/>
            <person name="Scott J.D."/>
            <person name="Shirley R."/>
            <person name="Liu L.-I."/>
            <person name="Glodek A."/>
            <person name="Kelley J.M."/>
            <person name="Weidman J.F."/>
            <person name="Phillips C.A."/>
            <person name="Spriggs T."/>
            <person name="Hedblom E."/>
            <person name="Cotton M.D."/>
            <person name="Utterback T.R."/>
            <person name="Hanna M.C."/>
            <person name="Nguyen D.T."/>
            <person name="Saudek D.M."/>
            <person name="Brandon R.C."/>
            <person name="Fine L.D."/>
            <person name="Fritchman J.L."/>
            <person name="Fuhrmann J.L."/>
            <person name="Geoghagen N.S.M."/>
            <person name="Gnehm C.L."/>
            <person name="McDonald L.A."/>
            <person name="Small K.V."/>
            <person name="Fraser C.M."/>
            <person name="Smith H.O."/>
            <person name="Venter J.C."/>
        </authorList>
    </citation>
    <scope>NUCLEOTIDE SEQUENCE [LARGE SCALE GENOMIC DNA]</scope>
    <source>
        <strain>ATCC 51907 / DSM 11121 / KW20 / Rd</strain>
    </source>
</reference>
<accession>P45177</accession>